<reference key="1">
    <citation type="journal article" date="2003" name="Mol. Genet. Genomics">
        <title>Gene content and organization of an 85-kb DNA segment from the genome of the phytopathogenic mollicute Spiroplasma kunkelii.</title>
        <authorList>
            <person name="Zhao Y."/>
            <person name="Hammond R.W."/>
            <person name="Jomantiene R."/>
            <person name="Dally E.L."/>
            <person name="Lee I.-M."/>
            <person name="Jia H."/>
            <person name="Wu H."/>
            <person name="Lin S."/>
            <person name="Zhang P."/>
            <person name="Kenton S."/>
            <person name="Najar F.Z."/>
            <person name="Hua A."/>
            <person name="Roe B.A."/>
            <person name="Fletcher J."/>
            <person name="Davis R.E."/>
        </authorList>
    </citation>
    <scope>NUCLEOTIDE SEQUENCE [GENOMIC DNA]</scope>
    <source>
        <strain>CR2-3x</strain>
    </source>
</reference>
<gene>
    <name evidence="1" type="primary">rpsH</name>
</gene>
<feature type="chain" id="PRO_0000228867" description="Small ribosomal subunit protein uS8">
    <location>
        <begin position="1"/>
        <end position="129"/>
    </location>
</feature>
<sequence>MMIDTIADMLTRIRNANQRLHKSVKMPSSKMKVRIAEILKKEGYVEDFKVSGDIKKDLTLTLKYKGKTKVISGLKRISKPGLRVYVTVEEVPQVLNGMGIAIISTNQGIMTDKAAKKAHLGGEVIAYVW</sequence>
<organism>
    <name type="scientific">Spiroplasma kunkelii</name>
    <dbReference type="NCBI Taxonomy" id="47834"/>
    <lineage>
        <taxon>Bacteria</taxon>
        <taxon>Bacillati</taxon>
        <taxon>Mycoplasmatota</taxon>
        <taxon>Mollicutes</taxon>
        <taxon>Entomoplasmatales</taxon>
        <taxon>Spiroplasmataceae</taxon>
        <taxon>Spiroplasma</taxon>
    </lineage>
</organism>
<comment type="function">
    <text evidence="1">One of the primary rRNA binding proteins, it binds directly to 16S rRNA central domain where it helps coordinate assembly of the platform of the 30S subunit.</text>
</comment>
<comment type="subunit">
    <text evidence="1">Part of the 30S ribosomal subunit. Contacts proteins S5 and S12.</text>
</comment>
<comment type="similarity">
    <text evidence="1">Belongs to the universal ribosomal protein uS8 family.</text>
</comment>
<name>RS8_SPIKU</name>
<evidence type="ECO:0000255" key="1">
    <source>
        <dbReference type="HAMAP-Rule" id="MF_01302"/>
    </source>
</evidence>
<evidence type="ECO:0000305" key="2"/>
<accession>Q6XYX4</accession>
<proteinExistence type="inferred from homology"/>
<dbReference type="EMBL" id="AY198133">
    <property type="protein sequence ID" value="AAP58905.1"/>
    <property type="molecule type" value="Genomic_DNA"/>
</dbReference>
<dbReference type="SMR" id="Q6XYX4"/>
<dbReference type="GO" id="GO:1990904">
    <property type="term" value="C:ribonucleoprotein complex"/>
    <property type="evidence" value="ECO:0007669"/>
    <property type="project" value="UniProtKB-KW"/>
</dbReference>
<dbReference type="GO" id="GO:0005840">
    <property type="term" value="C:ribosome"/>
    <property type="evidence" value="ECO:0007669"/>
    <property type="project" value="UniProtKB-KW"/>
</dbReference>
<dbReference type="GO" id="GO:0019843">
    <property type="term" value="F:rRNA binding"/>
    <property type="evidence" value="ECO:0007669"/>
    <property type="project" value="UniProtKB-UniRule"/>
</dbReference>
<dbReference type="GO" id="GO:0003735">
    <property type="term" value="F:structural constituent of ribosome"/>
    <property type="evidence" value="ECO:0007669"/>
    <property type="project" value="InterPro"/>
</dbReference>
<dbReference type="GO" id="GO:0006412">
    <property type="term" value="P:translation"/>
    <property type="evidence" value="ECO:0007669"/>
    <property type="project" value="UniProtKB-UniRule"/>
</dbReference>
<dbReference type="FunFam" id="3.30.1370.30:FF:000002">
    <property type="entry name" value="30S ribosomal protein S8"/>
    <property type="match status" value="1"/>
</dbReference>
<dbReference type="FunFam" id="3.30.1490.10:FF:000001">
    <property type="entry name" value="30S ribosomal protein S8"/>
    <property type="match status" value="1"/>
</dbReference>
<dbReference type="Gene3D" id="3.30.1370.30">
    <property type="match status" value="1"/>
</dbReference>
<dbReference type="Gene3D" id="3.30.1490.10">
    <property type="match status" value="1"/>
</dbReference>
<dbReference type="HAMAP" id="MF_01302_B">
    <property type="entry name" value="Ribosomal_uS8_B"/>
    <property type="match status" value="1"/>
</dbReference>
<dbReference type="InterPro" id="IPR000630">
    <property type="entry name" value="Ribosomal_uS8"/>
</dbReference>
<dbReference type="InterPro" id="IPR047863">
    <property type="entry name" value="Ribosomal_uS8_CS"/>
</dbReference>
<dbReference type="InterPro" id="IPR035987">
    <property type="entry name" value="Ribosomal_uS8_sf"/>
</dbReference>
<dbReference type="NCBIfam" id="NF001109">
    <property type="entry name" value="PRK00136.1"/>
    <property type="match status" value="1"/>
</dbReference>
<dbReference type="PANTHER" id="PTHR11758">
    <property type="entry name" value="40S RIBOSOMAL PROTEIN S15A"/>
    <property type="match status" value="1"/>
</dbReference>
<dbReference type="Pfam" id="PF00410">
    <property type="entry name" value="Ribosomal_S8"/>
    <property type="match status" value="1"/>
</dbReference>
<dbReference type="SUPFAM" id="SSF56047">
    <property type="entry name" value="Ribosomal protein S8"/>
    <property type="match status" value="1"/>
</dbReference>
<dbReference type="PROSITE" id="PS00053">
    <property type="entry name" value="RIBOSOMAL_S8"/>
    <property type="match status" value="1"/>
</dbReference>
<keyword id="KW-0687">Ribonucleoprotein</keyword>
<keyword id="KW-0689">Ribosomal protein</keyword>
<keyword id="KW-0694">RNA-binding</keyword>
<keyword id="KW-0699">rRNA-binding</keyword>
<protein>
    <recommendedName>
        <fullName evidence="1">Small ribosomal subunit protein uS8</fullName>
    </recommendedName>
    <alternativeName>
        <fullName evidence="2">30S ribosomal protein S8</fullName>
    </alternativeName>
</protein>